<protein>
    <recommendedName>
        <fullName evidence="1">Glucosamine-6-phosphate deaminase</fullName>
        <ecNumber evidence="1">3.5.99.6</ecNumber>
    </recommendedName>
    <alternativeName>
        <fullName evidence="1">GlcN6P deaminase</fullName>
        <shortName evidence="1">GNPDA</shortName>
    </alternativeName>
    <alternativeName>
        <fullName evidence="1">Glucosamine-6-phosphate isomerase</fullName>
    </alternativeName>
</protein>
<comment type="function">
    <text evidence="1">Catalyzes the reversible isomerization-deamination of glucosamine 6-phosphate (GlcN6P) to form fructose 6-phosphate (Fru6P) and ammonium ion.</text>
</comment>
<comment type="catalytic activity">
    <reaction evidence="1">
        <text>alpha-D-glucosamine 6-phosphate + H2O = beta-D-fructose 6-phosphate + NH4(+)</text>
        <dbReference type="Rhea" id="RHEA:12172"/>
        <dbReference type="ChEBI" id="CHEBI:15377"/>
        <dbReference type="ChEBI" id="CHEBI:28938"/>
        <dbReference type="ChEBI" id="CHEBI:57634"/>
        <dbReference type="ChEBI" id="CHEBI:75989"/>
        <dbReference type="EC" id="3.5.99.6"/>
    </reaction>
</comment>
<comment type="activity regulation">
    <text evidence="1">Allosterically activated by N-acetylglucosamine 6-phosphate (GlcNAc6P).</text>
</comment>
<comment type="pathway">
    <text evidence="1">Amino-sugar metabolism; N-acetylneuraminate degradation; D-fructose 6-phosphate from N-acetylneuraminate: step 5/5.</text>
</comment>
<comment type="subunit">
    <text evidence="1">Homohexamer.</text>
</comment>
<comment type="similarity">
    <text evidence="1">Belongs to the glucosamine/galactosamine-6-phosphate isomerase family. NagB subfamily.</text>
</comment>
<name>NAGB_VIBCM</name>
<evidence type="ECO:0000255" key="1">
    <source>
        <dbReference type="HAMAP-Rule" id="MF_01241"/>
    </source>
</evidence>
<accession>C3LWT7</accession>
<reference key="1">
    <citation type="journal article" date="2008" name="PLoS ONE">
        <title>A recalibrated molecular clock and independent origins for the cholera pandemic clones.</title>
        <authorList>
            <person name="Feng L."/>
            <person name="Reeves P.R."/>
            <person name="Lan R."/>
            <person name="Ren Y."/>
            <person name="Gao C."/>
            <person name="Zhou Z."/>
            <person name="Ren Y."/>
            <person name="Cheng J."/>
            <person name="Wang W."/>
            <person name="Wang J."/>
            <person name="Qian W."/>
            <person name="Li D."/>
            <person name="Wang L."/>
        </authorList>
    </citation>
    <scope>NUCLEOTIDE SEQUENCE [LARGE SCALE GENOMIC DNA]</scope>
    <source>
        <strain>M66-2</strain>
    </source>
</reference>
<keyword id="KW-0021">Allosteric enzyme</keyword>
<keyword id="KW-0119">Carbohydrate metabolism</keyword>
<keyword id="KW-0378">Hydrolase</keyword>
<gene>
    <name evidence="1" type="primary">nagB</name>
    <name type="ordered locus">VCM66_A0983</name>
</gene>
<dbReference type="EC" id="3.5.99.6" evidence="1"/>
<dbReference type="EMBL" id="CP001234">
    <property type="protein sequence ID" value="ACP07942.1"/>
    <property type="molecule type" value="Genomic_DNA"/>
</dbReference>
<dbReference type="RefSeq" id="WP_001237050.1">
    <property type="nucleotide sequence ID" value="NC_012580.1"/>
</dbReference>
<dbReference type="SMR" id="C3LWT7"/>
<dbReference type="GeneID" id="89512109"/>
<dbReference type="KEGG" id="vcm:VCM66_A0983"/>
<dbReference type="HOGENOM" id="CLU_049611_0_1_6"/>
<dbReference type="UniPathway" id="UPA00629">
    <property type="reaction ID" value="UER00684"/>
</dbReference>
<dbReference type="Proteomes" id="UP000001217">
    <property type="component" value="Chromosome II"/>
</dbReference>
<dbReference type="GO" id="GO:0005737">
    <property type="term" value="C:cytoplasm"/>
    <property type="evidence" value="ECO:0007669"/>
    <property type="project" value="TreeGrafter"/>
</dbReference>
<dbReference type="GO" id="GO:0004342">
    <property type="term" value="F:glucosamine-6-phosphate deaminase activity"/>
    <property type="evidence" value="ECO:0007669"/>
    <property type="project" value="UniProtKB-UniRule"/>
</dbReference>
<dbReference type="GO" id="GO:0042802">
    <property type="term" value="F:identical protein binding"/>
    <property type="evidence" value="ECO:0007669"/>
    <property type="project" value="TreeGrafter"/>
</dbReference>
<dbReference type="GO" id="GO:0005975">
    <property type="term" value="P:carbohydrate metabolic process"/>
    <property type="evidence" value="ECO:0007669"/>
    <property type="project" value="InterPro"/>
</dbReference>
<dbReference type="GO" id="GO:0006043">
    <property type="term" value="P:glucosamine catabolic process"/>
    <property type="evidence" value="ECO:0007669"/>
    <property type="project" value="TreeGrafter"/>
</dbReference>
<dbReference type="GO" id="GO:0006046">
    <property type="term" value="P:N-acetylglucosamine catabolic process"/>
    <property type="evidence" value="ECO:0007669"/>
    <property type="project" value="TreeGrafter"/>
</dbReference>
<dbReference type="GO" id="GO:0019262">
    <property type="term" value="P:N-acetylneuraminate catabolic process"/>
    <property type="evidence" value="ECO:0007669"/>
    <property type="project" value="UniProtKB-UniRule"/>
</dbReference>
<dbReference type="CDD" id="cd01399">
    <property type="entry name" value="GlcN6P_deaminase"/>
    <property type="match status" value="1"/>
</dbReference>
<dbReference type="FunFam" id="3.40.50.1360:FF:000002">
    <property type="entry name" value="Glucosamine-6-phosphate deaminase"/>
    <property type="match status" value="1"/>
</dbReference>
<dbReference type="Gene3D" id="3.40.50.1360">
    <property type="match status" value="1"/>
</dbReference>
<dbReference type="HAMAP" id="MF_01241">
    <property type="entry name" value="GlcN6P_deamin"/>
    <property type="match status" value="1"/>
</dbReference>
<dbReference type="InterPro" id="IPR006148">
    <property type="entry name" value="Glc/Gal-6P_isomerase"/>
</dbReference>
<dbReference type="InterPro" id="IPR004547">
    <property type="entry name" value="Glucosamine6P_isomerase"/>
</dbReference>
<dbReference type="InterPro" id="IPR018321">
    <property type="entry name" value="Glucosamine6P_isomerase_CS"/>
</dbReference>
<dbReference type="InterPro" id="IPR037171">
    <property type="entry name" value="NagB/RpiA_transferase-like"/>
</dbReference>
<dbReference type="NCBIfam" id="TIGR00502">
    <property type="entry name" value="nagB"/>
    <property type="match status" value="1"/>
</dbReference>
<dbReference type="NCBIfam" id="NF001685">
    <property type="entry name" value="PRK00443.1-5"/>
    <property type="match status" value="1"/>
</dbReference>
<dbReference type="PANTHER" id="PTHR11280">
    <property type="entry name" value="GLUCOSAMINE-6-PHOSPHATE ISOMERASE"/>
    <property type="match status" value="1"/>
</dbReference>
<dbReference type="PANTHER" id="PTHR11280:SF5">
    <property type="entry name" value="GLUCOSAMINE-6-PHOSPHATE ISOMERASE"/>
    <property type="match status" value="1"/>
</dbReference>
<dbReference type="Pfam" id="PF01182">
    <property type="entry name" value="Glucosamine_iso"/>
    <property type="match status" value="1"/>
</dbReference>
<dbReference type="SUPFAM" id="SSF100950">
    <property type="entry name" value="NagB/RpiA/CoA transferase-like"/>
    <property type="match status" value="1"/>
</dbReference>
<dbReference type="PROSITE" id="PS01161">
    <property type="entry name" value="GLC_GALNAC_ISOMERASE"/>
    <property type="match status" value="1"/>
</dbReference>
<proteinExistence type="inferred from homology"/>
<feature type="chain" id="PRO_1000165032" description="Glucosamine-6-phosphate deaminase">
    <location>
        <begin position="1"/>
        <end position="266"/>
    </location>
</feature>
<feature type="active site" description="Proton acceptor; for enolization step" evidence="1">
    <location>
        <position position="72"/>
    </location>
</feature>
<feature type="active site" description="For ring-opening step" evidence="1">
    <location>
        <position position="141"/>
    </location>
</feature>
<feature type="active site" description="Proton acceptor; for ring-opening step" evidence="1">
    <location>
        <position position="143"/>
    </location>
</feature>
<feature type="active site" description="For ring-opening step" evidence="1">
    <location>
        <position position="148"/>
    </location>
</feature>
<feature type="site" description="Part of the allosteric site" evidence="1">
    <location>
        <position position="151"/>
    </location>
</feature>
<feature type="site" description="Part of the allosteric site" evidence="1">
    <location>
        <position position="158"/>
    </location>
</feature>
<feature type="site" description="Part of the allosteric site" evidence="1">
    <location>
        <position position="160"/>
    </location>
</feature>
<feature type="site" description="Part of the allosteric site" evidence="1">
    <location>
        <position position="161"/>
    </location>
</feature>
<feature type="site" description="Part of the allosteric site" evidence="1">
    <location>
        <position position="254"/>
    </location>
</feature>
<organism>
    <name type="scientific">Vibrio cholerae serotype O1 (strain M66-2)</name>
    <dbReference type="NCBI Taxonomy" id="579112"/>
    <lineage>
        <taxon>Bacteria</taxon>
        <taxon>Pseudomonadati</taxon>
        <taxon>Pseudomonadota</taxon>
        <taxon>Gammaproteobacteria</taxon>
        <taxon>Vibrionales</taxon>
        <taxon>Vibrionaceae</taxon>
        <taxon>Vibrio</taxon>
    </lineage>
</organism>
<sequence length="266" mass="29548">MRLIPLKAAAQVGKWAAAHIVKRINEFQPTAERPFVLGLPTGGTPLATYKALIEMHKAGEVSFKHVVTFNMDEYVGLAADHPESYRSFMYNNFFNHIDIQEENINLLNGNTDDHEAECKRYEDKIKSYGKINLFMGGVGNDGHIAFNEPASSLSSRTRIKTLTEDTRIANSRFFDGDINQVPKYALTIGVGTLLDAQEIMILVTGHNKALALQAAVEGSVNHLWTVSALQLHPKAVIVCDEPSTQELKVKTVKYFTELEAKNIVGF</sequence>